<gene>
    <name evidence="1" type="primary">atpC</name>
    <name type="ordered locus">Mmc1_3457</name>
</gene>
<feature type="chain" id="PRO_1000081735" description="ATP synthase epsilon chain">
    <location>
        <begin position="1"/>
        <end position="137"/>
    </location>
</feature>
<dbReference type="EMBL" id="CP000471">
    <property type="protein sequence ID" value="ABK45942.1"/>
    <property type="molecule type" value="Genomic_DNA"/>
</dbReference>
<dbReference type="RefSeq" id="WP_011714998.1">
    <property type="nucleotide sequence ID" value="NC_008576.1"/>
</dbReference>
<dbReference type="SMR" id="A0LD99"/>
<dbReference type="STRING" id="156889.Mmc1_3457"/>
<dbReference type="KEGG" id="mgm:Mmc1_3457"/>
<dbReference type="eggNOG" id="COG0355">
    <property type="taxonomic scope" value="Bacteria"/>
</dbReference>
<dbReference type="HOGENOM" id="CLU_084338_2_1_5"/>
<dbReference type="OrthoDB" id="9799969at2"/>
<dbReference type="Proteomes" id="UP000002586">
    <property type="component" value="Chromosome"/>
</dbReference>
<dbReference type="GO" id="GO:0005886">
    <property type="term" value="C:plasma membrane"/>
    <property type="evidence" value="ECO:0007669"/>
    <property type="project" value="UniProtKB-SubCell"/>
</dbReference>
<dbReference type="GO" id="GO:0045259">
    <property type="term" value="C:proton-transporting ATP synthase complex"/>
    <property type="evidence" value="ECO:0007669"/>
    <property type="project" value="UniProtKB-KW"/>
</dbReference>
<dbReference type="GO" id="GO:0005524">
    <property type="term" value="F:ATP binding"/>
    <property type="evidence" value="ECO:0007669"/>
    <property type="project" value="UniProtKB-UniRule"/>
</dbReference>
<dbReference type="GO" id="GO:0046933">
    <property type="term" value="F:proton-transporting ATP synthase activity, rotational mechanism"/>
    <property type="evidence" value="ECO:0007669"/>
    <property type="project" value="UniProtKB-UniRule"/>
</dbReference>
<dbReference type="CDD" id="cd12152">
    <property type="entry name" value="F1-ATPase_delta"/>
    <property type="match status" value="1"/>
</dbReference>
<dbReference type="Gene3D" id="2.60.15.10">
    <property type="entry name" value="F0F1 ATP synthase delta/epsilon subunit, N-terminal"/>
    <property type="match status" value="1"/>
</dbReference>
<dbReference type="HAMAP" id="MF_00530">
    <property type="entry name" value="ATP_synth_epsil_bac"/>
    <property type="match status" value="1"/>
</dbReference>
<dbReference type="InterPro" id="IPR001469">
    <property type="entry name" value="ATP_synth_F1_dsu/esu"/>
</dbReference>
<dbReference type="InterPro" id="IPR020546">
    <property type="entry name" value="ATP_synth_F1_dsu/esu_N"/>
</dbReference>
<dbReference type="InterPro" id="IPR036771">
    <property type="entry name" value="ATPsynth_dsu/esu_N"/>
</dbReference>
<dbReference type="NCBIfam" id="TIGR01216">
    <property type="entry name" value="ATP_synt_epsi"/>
    <property type="match status" value="1"/>
</dbReference>
<dbReference type="PANTHER" id="PTHR13822">
    <property type="entry name" value="ATP SYNTHASE DELTA/EPSILON CHAIN"/>
    <property type="match status" value="1"/>
</dbReference>
<dbReference type="PANTHER" id="PTHR13822:SF10">
    <property type="entry name" value="ATP SYNTHASE EPSILON CHAIN, CHLOROPLASTIC"/>
    <property type="match status" value="1"/>
</dbReference>
<dbReference type="Pfam" id="PF02823">
    <property type="entry name" value="ATP-synt_DE_N"/>
    <property type="match status" value="1"/>
</dbReference>
<dbReference type="SUPFAM" id="SSF51344">
    <property type="entry name" value="Epsilon subunit of F1F0-ATP synthase N-terminal domain"/>
    <property type="match status" value="1"/>
</dbReference>
<reference key="1">
    <citation type="journal article" date="2009" name="Appl. Environ. Microbiol.">
        <title>Complete genome sequence of the chemolithoautotrophic marine magnetotactic coccus strain MC-1.</title>
        <authorList>
            <person name="Schubbe S."/>
            <person name="Williams T.J."/>
            <person name="Xie G."/>
            <person name="Kiss H.E."/>
            <person name="Brettin T.S."/>
            <person name="Martinez D."/>
            <person name="Ross C.A."/>
            <person name="Schuler D."/>
            <person name="Cox B.L."/>
            <person name="Nealson K.H."/>
            <person name="Bazylinski D.A."/>
        </authorList>
    </citation>
    <scope>NUCLEOTIDE SEQUENCE [LARGE SCALE GENOMIC DNA]</scope>
    <source>
        <strain>ATCC BAA-1437 / JCM 17883 / MC-1</strain>
    </source>
</reference>
<proteinExistence type="inferred from homology"/>
<keyword id="KW-0066">ATP synthesis</keyword>
<keyword id="KW-0997">Cell inner membrane</keyword>
<keyword id="KW-1003">Cell membrane</keyword>
<keyword id="KW-0139">CF(1)</keyword>
<keyword id="KW-0375">Hydrogen ion transport</keyword>
<keyword id="KW-0406">Ion transport</keyword>
<keyword id="KW-0472">Membrane</keyword>
<keyword id="KW-1185">Reference proteome</keyword>
<keyword id="KW-0813">Transport</keyword>
<evidence type="ECO:0000255" key="1">
    <source>
        <dbReference type="HAMAP-Rule" id="MF_00530"/>
    </source>
</evidence>
<comment type="function">
    <text evidence="1">Produces ATP from ADP in the presence of a proton gradient across the membrane.</text>
</comment>
<comment type="subunit">
    <text evidence="1">F-type ATPases have 2 components, CF(1) - the catalytic core - and CF(0) - the membrane proton channel. CF(1) has five subunits: alpha(3), beta(3), gamma(1), delta(1), epsilon(1). CF(0) has three main subunits: a, b and c.</text>
</comment>
<comment type="subcellular location">
    <subcellularLocation>
        <location evidence="1">Cell inner membrane</location>
        <topology evidence="1">Peripheral membrane protein</topology>
    </subcellularLocation>
</comment>
<comment type="similarity">
    <text evidence="1">Belongs to the ATPase epsilon chain family.</text>
</comment>
<sequence length="137" mass="14626">MGVTVDLEVVTPEKLILSETVQLVTVPGSEGYFGVLSGHVPMISSLRSGVVRMGQGDDAVHLAVSKGFAEVRPDRVTLLVDRAVFGKKVDAAAVTKIRDAAQDELDGTPTESEEYETLRDKLDFANAQLAALEGELV</sequence>
<protein>
    <recommendedName>
        <fullName evidence="1">ATP synthase epsilon chain</fullName>
    </recommendedName>
    <alternativeName>
        <fullName evidence="1">ATP synthase F1 sector epsilon subunit</fullName>
    </alternativeName>
    <alternativeName>
        <fullName evidence="1">F-ATPase epsilon subunit</fullName>
    </alternativeName>
</protein>
<organism>
    <name type="scientific">Magnetococcus marinus (strain ATCC BAA-1437 / JCM 17883 / MC-1)</name>
    <dbReference type="NCBI Taxonomy" id="156889"/>
    <lineage>
        <taxon>Bacteria</taxon>
        <taxon>Pseudomonadati</taxon>
        <taxon>Pseudomonadota</taxon>
        <taxon>Alphaproteobacteria</taxon>
        <taxon>Magnetococcales</taxon>
        <taxon>Magnetococcaceae</taxon>
        <taxon>Magnetococcus</taxon>
    </lineage>
</organism>
<name>ATPE_MAGMM</name>
<accession>A0LD99</accession>